<keyword id="KW-0067">ATP-binding</keyword>
<keyword id="KW-0460">Magnesium</keyword>
<keyword id="KW-0547">Nucleotide-binding</keyword>
<keyword id="KW-0808">Transferase</keyword>
<keyword id="KW-0819">tRNA processing</keyword>
<name>MIAA_TREPS</name>
<feature type="chain" id="PRO_1000098698" description="tRNA dimethylallyltransferase">
    <location>
        <begin position="1"/>
        <end position="316"/>
    </location>
</feature>
<feature type="region of interest" description="Interaction with substrate tRNA" evidence="1">
    <location>
        <begin position="52"/>
        <end position="55"/>
    </location>
</feature>
<feature type="binding site" evidence="1">
    <location>
        <begin position="27"/>
        <end position="34"/>
    </location>
    <ligand>
        <name>ATP</name>
        <dbReference type="ChEBI" id="CHEBI:30616"/>
    </ligand>
</feature>
<feature type="binding site" evidence="1">
    <location>
        <begin position="29"/>
        <end position="34"/>
    </location>
    <ligand>
        <name>substrate</name>
    </ligand>
</feature>
<feature type="site" description="Interaction with substrate tRNA" evidence="1">
    <location>
        <position position="117"/>
    </location>
</feature>
<organism>
    <name type="scientific">Treponema pallidum subsp. pallidum (strain SS14)</name>
    <dbReference type="NCBI Taxonomy" id="455434"/>
    <lineage>
        <taxon>Bacteria</taxon>
        <taxon>Pseudomonadati</taxon>
        <taxon>Spirochaetota</taxon>
        <taxon>Spirochaetia</taxon>
        <taxon>Spirochaetales</taxon>
        <taxon>Treponemataceae</taxon>
        <taxon>Treponema</taxon>
    </lineage>
</organism>
<accession>B2S3M6</accession>
<comment type="function">
    <text evidence="1">Catalyzes the transfer of a dimethylallyl group onto the adenine at position 37 in tRNAs that read codons beginning with uridine, leading to the formation of N6-(dimethylallyl)adenosine (i(6)A).</text>
</comment>
<comment type="catalytic activity">
    <reaction evidence="1">
        <text>adenosine(37) in tRNA + dimethylallyl diphosphate = N(6)-dimethylallyladenosine(37) in tRNA + diphosphate</text>
        <dbReference type="Rhea" id="RHEA:26482"/>
        <dbReference type="Rhea" id="RHEA-COMP:10162"/>
        <dbReference type="Rhea" id="RHEA-COMP:10375"/>
        <dbReference type="ChEBI" id="CHEBI:33019"/>
        <dbReference type="ChEBI" id="CHEBI:57623"/>
        <dbReference type="ChEBI" id="CHEBI:74411"/>
        <dbReference type="ChEBI" id="CHEBI:74415"/>
        <dbReference type="EC" id="2.5.1.75"/>
    </reaction>
</comment>
<comment type="cofactor">
    <cofactor evidence="1">
        <name>Mg(2+)</name>
        <dbReference type="ChEBI" id="CHEBI:18420"/>
    </cofactor>
</comment>
<comment type="subunit">
    <text evidence="1">Monomer.</text>
</comment>
<comment type="similarity">
    <text evidence="1">Belongs to the IPP transferase family.</text>
</comment>
<evidence type="ECO:0000255" key="1">
    <source>
        <dbReference type="HAMAP-Rule" id="MF_00185"/>
    </source>
</evidence>
<reference key="1">
    <citation type="journal article" date="2008" name="BMC Microbiol.">
        <title>Complete genome sequence of Treponema pallidum ssp. pallidum strain SS14 determined with oligonucleotide arrays.</title>
        <authorList>
            <person name="Matejkova P."/>
            <person name="Strouhal M."/>
            <person name="Smajs D."/>
            <person name="Norris S.J."/>
            <person name="Palzkill T."/>
            <person name="Petrosino J.F."/>
            <person name="Sodergren E."/>
            <person name="Norton J.E."/>
            <person name="Singh J."/>
            <person name="Richmond T.A."/>
            <person name="Molla M.N."/>
            <person name="Albert T.J."/>
            <person name="Weinstock G.M."/>
        </authorList>
    </citation>
    <scope>NUCLEOTIDE SEQUENCE [LARGE SCALE GENOMIC DNA]</scope>
    <source>
        <strain>SS14</strain>
    </source>
</reference>
<gene>
    <name evidence="1" type="primary">miaA</name>
    <name type="ordered locus">TPASS_0637</name>
</gene>
<sequence length="316" mass="36174">MRLETQALVPYPVRFDRSHHDALVVLGATATGKTALAVALAQKYQGEIISADSRQVYRGLDVGTGKDLALYGSVPYHLIDVCDPYEEYNVFRFQQAVYGIVPSILRAHKVPIIVGGTGLYLDAVLRQYALVPVERNQALRASLRGASLSHMRAVYFSLKDSHAVHNKTDLEDPARLMRAIEIAVFHATHPELLQQARETRPMMRAKVYGIQYPRSMLRARIRARLEQRIRGGLIEEVAALHKGGVSWQRLEYFGLEYRFTAQYLQGIIATRDEYVDLLFRAISRFAKRQETWFRRMQRLGVKIHWLVHTENGFVLR</sequence>
<dbReference type="EC" id="2.5.1.75" evidence="1"/>
<dbReference type="EMBL" id="CP000805">
    <property type="protein sequence ID" value="ACD71055.1"/>
    <property type="molecule type" value="Genomic_DNA"/>
</dbReference>
<dbReference type="RefSeq" id="WP_010882082.1">
    <property type="nucleotide sequence ID" value="NC_021508.1"/>
</dbReference>
<dbReference type="SMR" id="B2S3M6"/>
<dbReference type="GeneID" id="93876403"/>
<dbReference type="KEGG" id="tpp:TPASS_0637"/>
<dbReference type="PATRIC" id="fig|455434.6.peg.631"/>
<dbReference type="Proteomes" id="UP000001202">
    <property type="component" value="Chromosome"/>
</dbReference>
<dbReference type="GO" id="GO:0005524">
    <property type="term" value="F:ATP binding"/>
    <property type="evidence" value="ECO:0007669"/>
    <property type="project" value="UniProtKB-UniRule"/>
</dbReference>
<dbReference type="GO" id="GO:0052381">
    <property type="term" value="F:tRNA dimethylallyltransferase activity"/>
    <property type="evidence" value="ECO:0007669"/>
    <property type="project" value="UniProtKB-UniRule"/>
</dbReference>
<dbReference type="GO" id="GO:0006400">
    <property type="term" value="P:tRNA modification"/>
    <property type="evidence" value="ECO:0007669"/>
    <property type="project" value="TreeGrafter"/>
</dbReference>
<dbReference type="Gene3D" id="3.40.50.300">
    <property type="entry name" value="P-loop containing nucleotide triphosphate hydrolases"/>
    <property type="match status" value="1"/>
</dbReference>
<dbReference type="HAMAP" id="MF_00185">
    <property type="entry name" value="IPP_trans"/>
    <property type="match status" value="1"/>
</dbReference>
<dbReference type="InterPro" id="IPR039657">
    <property type="entry name" value="Dimethylallyltransferase"/>
</dbReference>
<dbReference type="InterPro" id="IPR018022">
    <property type="entry name" value="IPT"/>
</dbReference>
<dbReference type="InterPro" id="IPR027417">
    <property type="entry name" value="P-loop_NTPase"/>
</dbReference>
<dbReference type="NCBIfam" id="TIGR00174">
    <property type="entry name" value="miaA"/>
    <property type="match status" value="1"/>
</dbReference>
<dbReference type="PANTHER" id="PTHR11088">
    <property type="entry name" value="TRNA DIMETHYLALLYLTRANSFERASE"/>
    <property type="match status" value="1"/>
</dbReference>
<dbReference type="PANTHER" id="PTHR11088:SF60">
    <property type="entry name" value="TRNA DIMETHYLALLYLTRANSFERASE"/>
    <property type="match status" value="1"/>
</dbReference>
<dbReference type="Pfam" id="PF01715">
    <property type="entry name" value="IPPT"/>
    <property type="match status" value="1"/>
</dbReference>
<dbReference type="SUPFAM" id="SSF52540">
    <property type="entry name" value="P-loop containing nucleoside triphosphate hydrolases"/>
    <property type="match status" value="1"/>
</dbReference>
<protein>
    <recommendedName>
        <fullName evidence="1">tRNA dimethylallyltransferase</fullName>
        <ecNumber evidence="1">2.5.1.75</ecNumber>
    </recommendedName>
    <alternativeName>
        <fullName evidence="1">Dimethylallyl diphosphate:tRNA dimethylallyltransferase</fullName>
        <shortName evidence="1">DMAPP:tRNA dimethylallyltransferase</shortName>
        <shortName evidence="1">DMATase</shortName>
    </alternativeName>
    <alternativeName>
        <fullName evidence="1">Isopentenyl-diphosphate:tRNA isopentenyltransferase</fullName>
        <shortName evidence="1">IPP transferase</shortName>
        <shortName evidence="1">IPPT</shortName>
        <shortName evidence="1">IPTase</shortName>
    </alternativeName>
</protein>
<proteinExistence type="inferred from homology"/>